<accession>Q07838</accession>
<reference key="1">
    <citation type="journal article" date="1993" name="J. Gen. Microbiol.">
        <title>Cloning and sequencing of the gene which encodes the highly inducible acetamidase of Mycobacterium smegmatis.</title>
        <authorList>
            <person name="Mahenthiralingam E."/>
            <person name="Draper P."/>
            <person name="Davis E.O."/>
            <person name="Colston M.J."/>
        </authorList>
    </citation>
    <scope>NUCLEOTIDE SEQUENCE [GENOMIC DNA]</scope>
    <scope>PROTEIN SEQUENCE OF 2-24; 82-101 AND 181-195</scope>
    <source>
        <strain>ATCC 19420 / DSM 43756 / JCM 5866 / KCTC 9108 / NCTC 8159 / NRRL B-14616 / Cornell 3</strain>
    </source>
</reference>
<proteinExistence type="evidence at protein level"/>
<feature type="initiator methionine" description="Removed" evidence="1">
    <location>
        <position position="1"/>
    </location>
</feature>
<feature type="chain" id="PRO_0000064577" description="Acetamidase">
    <location>
        <begin position="2"/>
        <end position="406"/>
    </location>
</feature>
<feature type="region of interest" description="Disordered" evidence="2">
    <location>
        <begin position="387"/>
        <end position="406"/>
    </location>
</feature>
<feature type="compositionally biased region" description="Low complexity" evidence="2">
    <location>
        <begin position="387"/>
        <end position="399"/>
    </location>
</feature>
<evidence type="ECO:0000255" key="1"/>
<evidence type="ECO:0000256" key="2">
    <source>
        <dbReference type="SAM" id="MobiDB-lite"/>
    </source>
</evidence>
<evidence type="ECO:0000305" key="3"/>
<name>AMDA_MYCSM</name>
<sequence>MPEVVFSVDHSKSMRDQAVPGHNRWHPDIPAAATVKPGSEFRIECKEWTDGQIGNNDSANDVRDVDLAPCHMLSGPIKVEGAEPGDLLIVDILDIGPVPQTNGPNCGEGWGYSGIFAKVNGGGFLTDYYPDAYKAIWDFHGQQCTSRHVPGVRYTGITHPGLFGTAPSPDLLAKWNERERALIATDPDRVPPLALPPLVDGTLGGTASGDLLQAIANDGARTVPPRENGGNHDIKNFTRGSRIFYPVFVEGAMLSGGDLHFSQGDGEINFCGAIEMGGFIDMHVDLIKGGMETYGVTTNPIFMPGRVEPLYSEWLTFIGISVDHAENRNAYMDATMAYRNACLNAIEYLKKWGYTGEQAYLILGTSPIEGASAASWTSRTHVVRCSCRPRSSTSTSPRRQGPAEGR</sequence>
<dbReference type="EC" id="3.5.1.4"/>
<dbReference type="EMBL" id="X57175">
    <property type="protein sequence ID" value="CAA40462.1"/>
    <property type="molecule type" value="Genomic_DNA"/>
</dbReference>
<dbReference type="PIR" id="A47696">
    <property type="entry name" value="A47696"/>
</dbReference>
<dbReference type="SMR" id="Q07838"/>
<dbReference type="GO" id="GO:0004040">
    <property type="term" value="F:amidase activity"/>
    <property type="evidence" value="ECO:0007669"/>
    <property type="project" value="UniProtKB-EC"/>
</dbReference>
<dbReference type="Gene3D" id="2.60.120.580">
    <property type="entry name" value="Acetamidase/Formamidase-like domains"/>
    <property type="match status" value="1"/>
</dbReference>
<dbReference type="InterPro" id="IPR004304">
    <property type="entry name" value="FmdA_AmdA"/>
</dbReference>
<dbReference type="InterPro" id="IPR054833">
    <property type="entry name" value="FormamaseFmdA"/>
</dbReference>
<dbReference type="NCBIfam" id="NF045496">
    <property type="entry name" value="FormamaseFmdA"/>
    <property type="match status" value="1"/>
</dbReference>
<dbReference type="PANTHER" id="PTHR31891">
    <property type="entry name" value="FORMAMIDASE C869.04-RELATED"/>
    <property type="match status" value="1"/>
</dbReference>
<dbReference type="PANTHER" id="PTHR31891:SF1">
    <property type="entry name" value="FORMAMIDASE C869.04-RELATED"/>
    <property type="match status" value="1"/>
</dbReference>
<dbReference type="Pfam" id="PF03069">
    <property type="entry name" value="FmdA_AmdA"/>
    <property type="match status" value="1"/>
</dbReference>
<dbReference type="SUPFAM" id="SSF141130">
    <property type="entry name" value="Acetamidase/Formamidase-like"/>
    <property type="match status" value="1"/>
</dbReference>
<gene>
    <name type="primary">amdA</name>
</gene>
<keyword id="KW-0903">Direct protein sequencing</keyword>
<keyword id="KW-0378">Hydrolase</keyword>
<organism>
    <name type="scientific">Mycolicibacterium smegmatis</name>
    <name type="common">Mycobacterium smegmatis</name>
    <dbReference type="NCBI Taxonomy" id="1772"/>
    <lineage>
        <taxon>Bacteria</taxon>
        <taxon>Bacillati</taxon>
        <taxon>Actinomycetota</taxon>
        <taxon>Actinomycetes</taxon>
        <taxon>Mycobacteriales</taxon>
        <taxon>Mycobacteriaceae</taxon>
        <taxon>Mycolicibacterium</taxon>
    </lineage>
</organism>
<protein>
    <recommendedName>
        <fullName>Acetamidase</fullName>
        <ecNumber>3.5.1.4</ecNumber>
    </recommendedName>
</protein>
<comment type="function">
    <text>Allows acetamide to be used as a sole carbon or nitrogen source.</text>
</comment>
<comment type="catalytic activity">
    <reaction>
        <text>a monocarboxylic acid amide + H2O = a monocarboxylate + NH4(+)</text>
        <dbReference type="Rhea" id="RHEA:12020"/>
        <dbReference type="ChEBI" id="CHEBI:15377"/>
        <dbReference type="ChEBI" id="CHEBI:28938"/>
        <dbReference type="ChEBI" id="CHEBI:35757"/>
        <dbReference type="ChEBI" id="CHEBI:83628"/>
        <dbReference type="EC" id="3.5.1.4"/>
    </reaction>
</comment>
<comment type="catalytic activity">
    <reaction>
        <text>acetamide + H2O = acetate + NH4(+)</text>
        <dbReference type="Rhea" id="RHEA:45048"/>
        <dbReference type="ChEBI" id="CHEBI:15377"/>
        <dbReference type="ChEBI" id="CHEBI:27856"/>
        <dbReference type="ChEBI" id="CHEBI:28938"/>
        <dbReference type="ChEBI" id="CHEBI:30089"/>
        <dbReference type="EC" id="3.5.1.4"/>
    </reaction>
</comment>
<comment type="similarity">
    <text evidence="3">Belongs to the acetamidase/formamidase family.</text>
</comment>